<evidence type="ECO:0000255" key="1">
    <source>
        <dbReference type="HAMAP-Rule" id="MF_00435"/>
    </source>
</evidence>
<evidence type="ECO:0000255" key="2">
    <source>
        <dbReference type="PROSITE-ProRule" id="PRU01197"/>
    </source>
</evidence>
<evidence type="ECO:0000255" key="3">
    <source>
        <dbReference type="PROSITE-ProRule" id="PRU01198"/>
    </source>
</evidence>
<protein>
    <recommendedName>
        <fullName evidence="1">Ketol-acid reductoisomerase (NADP(+))</fullName>
        <shortName evidence="1">KARI</shortName>
        <ecNumber evidence="1">1.1.1.86</ecNumber>
    </recommendedName>
    <alternativeName>
        <fullName evidence="1">Acetohydroxy-acid isomeroreductase</fullName>
        <shortName evidence="1">AHIR</shortName>
    </alternativeName>
    <alternativeName>
        <fullName evidence="1">Alpha-keto-beta-hydroxylacyl reductoisomerase</fullName>
    </alternativeName>
    <alternativeName>
        <fullName evidence="1">Ketol-acid reductoisomerase type 2</fullName>
    </alternativeName>
    <alternativeName>
        <fullName evidence="1">Ketol-acid reductoisomerase type II</fullName>
    </alternativeName>
</protein>
<sequence>MANYFNTLPLRLQLEQLGVCEFMEQSEFADGISALAGKKVVIVGCGAQGLNQGLNMRDSGLDISYALRADAIAEKRASYKNATENGFKVGTYEELIPTADLVCNLTPDKQHTSVVNAIMPLMKQGSTLAYSHGFNIVEEGMQIRKDITVIMCAPKCPGSEVREEYKRGFGVPTLIAVHPENDPNGFGLDQAKAYAVATGGHKAGVLRSSFVAEVKSDLMGEQTILCGLLQTGSILCFDKMVEKGIDAAYASKLIQYGWETITEALKHGGITNMMDRLNNPSKIEAYELAEELKDIMRPLFQKHQDDIISGEFSRTMMIDWANDDVNLLKWRAATGETNFEKTAPQEAPISEQEYFDNGVLMIAMVKAGVELAFETMTEAGIIEESAYYESLHELPLIANTIARKKLFEMNRVISDTAEYGCYLFDHACKPLLTEFMKKVETNIIGKPFSTSNGVDNTVLIAVNKEIRQHPIEEVGAWLRESMTAMKKIG</sequence>
<dbReference type="EC" id="1.1.1.86" evidence="1"/>
<dbReference type="EMBL" id="CP000685">
    <property type="protein sequence ID" value="ABQ05881.1"/>
    <property type="molecule type" value="Genomic_DNA"/>
</dbReference>
<dbReference type="RefSeq" id="WP_012024919.1">
    <property type="nucleotide sequence ID" value="NZ_MUGZ01000033.1"/>
</dbReference>
<dbReference type="SMR" id="A5FFY3"/>
<dbReference type="STRING" id="376686.Fjoh_2860"/>
<dbReference type="KEGG" id="fjo:Fjoh_2860"/>
<dbReference type="eggNOG" id="COG0059">
    <property type="taxonomic scope" value="Bacteria"/>
</dbReference>
<dbReference type="HOGENOM" id="CLU_551905_0_0_10"/>
<dbReference type="OrthoDB" id="9804088at2"/>
<dbReference type="UniPathway" id="UPA00047">
    <property type="reaction ID" value="UER00056"/>
</dbReference>
<dbReference type="UniPathway" id="UPA00049">
    <property type="reaction ID" value="UER00060"/>
</dbReference>
<dbReference type="Proteomes" id="UP000006694">
    <property type="component" value="Chromosome"/>
</dbReference>
<dbReference type="GO" id="GO:0005829">
    <property type="term" value="C:cytosol"/>
    <property type="evidence" value="ECO:0007669"/>
    <property type="project" value="TreeGrafter"/>
</dbReference>
<dbReference type="GO" id="GO:0004455">
    <property type="term" value="F:ketol-acid reductoisomerase activity"/>
    <property type="evidence" value="ECO:0007669"/>
    <property type="project" value="UniProtKB-UniRule"/>
</dbReference>
<dbReference type="GO" id="GO:0000287">
    <property type="term" value="F:magnesium ion binding"/>
    <property type="evidence" value="ECO:0007669"/>
    <property type="project" value="UniProtKB-UniRule"/>
</dbReference>
<dbReference type="GO" id="GO:0009097">
    <property type="term" value="P:isoleucine biosynthetic process"/>
    <property type="evidence" value="ECO:0007669"/>
    <property type="project" value="UniProtKB-UniRule"/>
</dbReference>
<dbReference type="GO" id="GO:0009099">
    <property type="term" value="P:L-valine biosynthetic process"/>
    <property type="evidence" value="ECO:0007669"/>
    <property type="project" value="UniProtKB-UniRule"/>
</dbReference>
<dbReference type="Gene3D" id="1.10.1040.10">
    <property type="entry name" value="N-(1-d-carboxylethyl)-l-norvaline Dehydrogenase, domain 2"/>
    <property type="match status" value="1"/>
</dbReference>
<dbReference type="Gene3D" id="3.40.50.720">
    <property type="entry name" value="NAD(P)-binding Rossmann-like Domain"/>
    <property type="match status" value="1"/>
</dbReference>
<dbReference type="HAMAP" id="MF_00435">
    <property type="entry name" value="IlvC"/>
    <property type="match status" value="1"/>
</dbReference>
<dbReference type="InterPro" id="IPR008927">
    <property type="entry name" value="6-PGluconate_DH-like_C_sf"/>
</dbReference>
<dbReference type="InterPro" id="IPR013328">
    <property type="entry name" value="6PGD_dom2"/>
</dbReference>
<dbReference type="InterPro" id="IPR013023">
    <property type="entry name" value="KARI"/>
</dbReference>
<dbReference type="InterPro" id="IPR000506">
    <property type="entry name" value="KARI_C"/>
</dbReference>
<dbReference type="InterPro" id="IPR013116">
    <property type="entry name" value="KARI_N"/>
</dbReference>
<dbReference type="InterPro" id="IPR036291">
    <property type="entry name" value="NAD(P)-bd_dom_sf"/>
</dbReference>
<dbReference type="NCBIfam" id="TIGR00465">
    <property type="entry name" value="ilvC"/>
    <property type="match status" value="1"/>
</dbReference>
<dbReference type="NCBIfam" id="NF003557">
    <property type="entry name" value="PRK05225.1"/>
    <property type="match status" value="1"/>
</dbReference>
<dbReference type="PANTHER" id="PTHR21371">
    <property type="entry name" value="KETOL-ACID REDUCTOISOMERASE, MITOCHONDRIAL"/>
    <property type="match status" value="1"/>
</dbReference>
<dbReference type="PANTHER" id="PTHR21371:SF1">
    <property type="entry name" value="KETOL-ACID REDUCTOISOMERASE, MITOCHONDRIAL"/>
    <property type="match status" value="1"/>
</dbReference>
<dbReference type="Pfam" id="PF01450">
    <property type="entry name" value="KARI_C"/>
    <property type="match status" value="2"/>
</dbReference>
<dbReference type="Pfam" id="PF07991">
    <property type="entry name" value="KARI_N"/>
    <property type="match status" value="1"/>
</dbReference>
<dbReference type="SUPFAM" id="SSF48179">
    <property type="entry name" value="6-phosphogluconate dehydrogenase C-terminal domain-like"/>
    <property type="match status" value="2"/>
</dbReference>
<dbReference type="SUPFAM" id="SSF51735">
    <property type="entry name" value="NAD(P)-binding Rossmann-fold domains"/>
    <property type="match status" value="1"/>
</dbReference>
<dbReference type="PROSITE" id="PS51851">
    <property type="entry name" value="KARI_C"/>
    <property type="match status" value="2"/>
</dbReference>
<dbReference type="PROSITE" id="PS51850">
    <property type="entry name" value="KARI_N"/>
    <property type="match status" value="1"/>
</dbReference>
<comment type="function">
    <text evidence="1">Involved in the biosynthesis of branched-chain amino acids (BCAA). Catalyzes an alkyl-migration followed by a ketol-acid reduction of (S)-2-acetolactate (S2AL) to yield (R)-2,3-dihydroxy-isovalerate. In the isomerase reaction, S2AL is rearranged via a Mg-dependent methyl migration to produce 3-hydroxy-3-methyl-2-ketobutyrate (HMKB). In the reductase reaction, this 2-ketoacid undergoes a metal-dependent reduction by NADPH to yield (R)-2,3-dihydroxy-isovalerate.</text>
</comment>
<comment type="catalytic activity">
    <reaction evidence="1">
        <text>(2R)-2,3-dihydroxy-3-methylbutanoate + NADP(+) = (2S)-2-acetolactate + NADPH + H(+)</text>
        <dbReference type="Rhea" id="RHEA:22068"/>
        <dbReference type="ChEBI" id="CHEBI:15378"/>
        <dbReference type="ChEBI" id="CHEBI:49072"/>
        <dbReference type="ChEBI" id="CHEBI:57783"/>
        <dbReference type="ChEBI" id="CHEBI:58349"/>
        <dbReference type="ChEBI" id="CHEBI:58476"/>
        <dbReference type="EC" id="1.1.1.86"/>
    </reaction>
</comment>
<comment type="catalytic activity">
    <reaction evidence="1">
        <text>(2R,3R)-2,3-dihydroxy-3-methylpentanoate + NADP(+) = (S)-2-ethyl-2-hydroxy-3-oxobutanoate + NADPH + H(+)</text>
        <dbReference type="Rhea" id="RHEA:13493"/>
        <dbReference type="ChEBI" id="CHEBI:15378"/>
        <dbReference type="ChEBI" id="CHEBI:49256"/>
        <dbReference type="ChEBI" id="CHEBI:49258"/>
        <dbReference type="ChEBI" id="CHEBI:57783"/>
        <dbReference type="ChEBI" id="CHEBI:58349"/>
        <dbReference type="EC" id="1.1.1.86"/>
    </reaction>
</comment>
<comment type="cofactor">
    <cofactor evidence="1">
        <name>Mg(2+)</name>
        <dbReference type="ChEBI" id="CHEBI:18420"/>
    </cofactor>
    <text evidence="1">Binds 2 magnesium ions per subunit.</text>
</comment>
<comment type="pathway">
    <text evidence="1">Amino-acid biosynthesis; L-isoleucine biosynthesis; L-isoleucine from 2-oxobutanoate: step 2/4.</text>
</comment>
<comment type="pathway">
    <text evidence="1">Amino-acid biosynthesis; L-valine biosynthesis; L-valine from pyruvate: step 2/4.</text>
</comment>
<comment type="similarity">
    <text evidence="1">Belongs to the ketol-acid reductoisomerase family.</text>
</comment>
<name>ILVC_FLAJ1</name>
<organism>
    <name type="scientific">Flavobacterium johnsoniae (strain ATCC 17061 / DSM 2064 / JCM 8514 / BCRC 14874 / CCUG 350202 / NBRC 14942 / NCIMB 11054 / UW101)</name>
    <name type="common">Cytophaga johnsonae</name>
    <dbReference type="NCBI Taxonomy" id="376686"/>
    <lineage>
        <taxon>Bacteria</taxon>
        <taxon>Pseudomonadati</taxon>
        <taxon>Bacteroidota</taxon>
        <taxon>Flavobacteriia</taxon>
        <taxon>Flavobacteriales</taxon>
        <taxon>Flavobacteriaceae</taxon>
        <taxon>Flavobacterium</taxon>
    </lineage>
</organism>
<feature type="chain" id="PRO_1000190965" description="Ketol-acid reductoisomerase (NADP(+))">
    <location>
        <begin position="1"/>
        <end position="489"/>
    </location>
</feature>
<feature type="domain" description="KARI N-terminal Rossmann" evidence="2">
    <location>
        <begin position="17"/>
        <end position="208"/>
    </location>
</feature>
<feature type="domain" description="KARI C-terminal knotted 1" evidence="3">
    <location>
        <begin position="209"/>
        <end position="344"/>
    </location>
</feature>
<feature type="domain" description="KARI C-terminal knotted 2" evidence="3">
    <location>
        <begin position="345"/>
        <end position="485"/>
    </location>
</feature>
<feature type="active site" evidence="1">
    <location>
        <position position="132"/>
    </location>
</feature>
<feature type="binding site" evidence="1">
    <location>
        <begin position="45"/>
        <end position="48"/>
    </location>
    <ligand>
        <name>NADP(+)</name>
        <dbReference type="ChEBI" id="CHEBI:58349"/>
    </ligand>
</feature>
<feature type="binding site" evidence="1">
    <location>
        <position position="68"/>
    </location>
    <ligand>
        <name>NADP(+)</name>
        <dbReference type="ChEBI" id="CHEBI:58349"/>
    </ligand>
</feature>
<feature type="binding site" evidence="1">
    <location>
        <position position="76"/>
    </location>
    <ligand>
        <name>NADP(+)</name>
        <dbReference type="ChEBI" id="CHEBI:58349"/>
    </ligand>
</feature>
<feature type="binding site" evidence="1">
    <location>
        <position position="78"/>
    </location>
    <ligand>
        <name>NADP(+)</name>
        <dbReference type="ChEBI" id="CHEBI:58349"/>
    </ligand>
</feature>
<feature type="binding site" evidence="1">
    <location>
        <begin position="108"/>
        <end position="110"/>
    </location>
    <ligand>
        <name>NADP(+)</name>
        <dbReference type="ChEBI" id="CHEBI:58349"/>
    </ligand>
</feature>
<feature type="binding site" evidence="1">
    <location>
        <position position="158"/>
    </location>
    <ligand>
        <name>NADP(+)</name>
        <dbReference type="ChEBI" id="CHEBI:58349"/>
    </ligand>
</feature>
<feature type="binding site" evidence="1">
    <location>
        <position position="217"/>
    </location>
    <ligand>
        <name>Mg(2+)</name>
        <dbReference type="ChEBI" id="CHEBI:18420"/>
        <label>1</label>
    </ligand>
</feature>
<feature type="binding site" evidence="1">
    <location>
        <position position="217"/>
    </location>
    <ligand>
        <name>Mg(2+)</name>
        <dbReference type="ChEBI" id="CHEBI:18420"/>
        <label>2</label>
    </ligand>
</feature>
<feature type="binding site" evidence="1">
    <location>
        <position position="221"/>
    </location>
    <ligand>
        <name>Mg(2+)</name>
        <dbReference type="ChEBI" id="CHEBI:18420"/>
        <label>1</label>
    </ligand>
</feature>
<feature type="binding site" evidence="1">
    <location>
        <position position="389"/>
    </location>
    <ligand>
        <name>Mg(2+)</name>
        <dbReference type="ChEBI" id="CHEBI:18420"/>
        <label>2</label>
    </ligand>
</feature>
<feature type="binding site" evidence="1">
    <location>
        <position position="393"/>
    </location>
    <ligand>
        <name>Mg(2+)</name>
        <dbReference type="ChEBI" id="CHEBI:18420"/>
        <label>2</label>
    </ligand>
</feature>
<feature type="binding site" evidence="1">
    <location>
        <position position="414"/>
    </location>
    <ligand>
        <name>substrate</name>
    </ligand>
</feature>
<gene>
    <name evidence="1" type="primary">ilvC</name>
    <name type="ordered locus">Fjoh_2860</name>
</gene>
<proteinExistence type="inferred from homology"/>
<accession>A5FFY3</accession>
<reference key="1">
    <citation type="journal article" date="2009" name="Appl. Environ. Microbiol.">
        <title>Novel features of the polysaccharide-digesting gliding bacterium Flavobacterium johnsoniae as revealed by genome sequence analysis.</title>
        <authorList>
            <person name="McBride M.J."/>
            <person name="Xie G."/>
            <person name="Martens E.C."/>
            <person name="Lapidus A."/>
            <person name="Henrissat B."/>
            <person name="Rhodes R.G."/>
            <person name="Goltsman E."/>
            <person name="Wang W."/>
            <person name="Xu J."/>
            <person name="Hunnicutt D.W."/>
            <person name="Staroscik A.M."/>
            <person name="Hoover T.R."/>
            <person name="Cheng Y.Q."/>
            <person name="Stein J.L."/>
        </authorList>
    </citation>
    <scope>NUCLEOTIDE SEQUENCE [LARGE SCALE GENOMIC DNA]</scope>
    <source>
        <strain>ATCC 17061 / DSM 2064 / JCM 8514 / BCRC 14874 / CCUG 350202 / NBRC 14942 / NCIMB 11054 / UW101</strain>
    </source>
</reference>
<keyword id="KW-0028">Amino-acid biosynthesis</keyword>
<keyword id="KW-0100">Branched-chain amino acid biosynthesis</keyword>
<keyword id="KW-0460">Magnesium</keyword>
<keyword id="KW-0479">Metal-binding</keyword>
<keyword id="KW-0521">NADP</keyword>
<keyword id="KW-0560">Oxidoreductase</keyword>
<keyword id="KW-0677">Repeat</keyword>